<accession>P67454</accession>
<accession>Q8YFL7</accession>
<name>EX7S_BRUME</name>
<comment type="function">
    <text evidence="1">Bidirectionally degrades single-stranded DNA into large acid-insoluble oligonucleotides, which are then degraded further into small acid-soluble oligonucleotides.</text>
</comment>
<comment type="catalytic activity">
    <reaction evidence="1">
        <text>Exonucleolytic cleavage in either 5'- to 3'- or 3'- to 5'-direction to yield nucleoside 5'-phosphates.</text>
        <dbReference type="EC" id="3.1.11.6"/>
    </reaction>
</comment>
<comment type="subunit">
    <text evidence="1">Heterooligomer composed of large and small subunits.</text>
</comment>
<comment type="subcellular location">
    <subcellularLocation>
        <location evidence="1">Cytoplasm</location>
    </subcellularLocation>
</comment>
<comment type="similarity">
    <text evidence="1">Belongs to the XseB family.</text>
</comment>
<proteinExistence type="inferred from homology"/>
<organism>
    <name type="scientific">Brucella melitensis biotype 1 (strain ATCC 23456 / CCUG 17765 / NCTC 10094 / 16M)</name>
    <dbReference type="NCBI Taxonomy" id="224914"/>
    <lineage>
        <taxon>Bacteria</taxon>
        <taxon>Pseudomonadati</taxon>
        <taxon>Pseudomonadota</taxon>
        <taxon>Alphaproteobacteria</taxon>
        <taxon>Hyphomicrobiales</taxon>
        <taxon>Brucellaceae</taxon>
        <taxon>Brucella/Ochrobactrum group</taxon>
        <taxon>Brucella</taxon>
    </lineage>
</organism>
<evidence type="ECO:0000255" key="1">
    <source>
        <dbReference type="HAMAP-Rule" id="MF_00337"/>
    </source>
</evidence>
<protein>
    <recommendedName>
        <fullName evidence="1">Exodeoxyribonuclease 7 small subunit</fullName>
        <ecNumber evidence="1">3.1.11.6</ecNumber>
    </recommendedName>
    <alternativeName>
        <fullName evidence="1">Exodeoxyribonuclease VII small subunit</fullName>
        <shortName evidence="1">Exonuclease VII small subunit</shortName>
    </alternativeName>
</protein>
<dbReference type="EC" id="3.1.11.6" evidence="1"/>
<dbReference type="EMBL" id="AE008917">
    <property type="protein sequence ID" value="AAL52684.1"/>
    <property type="molecule type" value="Genomic_DNA"/>
</dbReference>
<dbReference type="PIR" id="AI3439">
    <property type="entry name" value="AI3439"/>
</dbReference>
<dbReference type="SMR" id="P67454"/>
<dbReference type="KEGG" id="bme:BMEI1503"/>
<dbReference type="eggNOG" id="COG1722">
    <property type="taxonomic scope" value="Bacteria"/>
</dbReference>
<dbReference type="Proteomes" id="UP000000419">
    <property type="component" value="Chromosome I"/>
</dbReference>
<dbReference type="GO" id="GO:0005829">
    <property type="term" value="C:cytosol"/>
    <property type="evidence" value="ECO:0007669"/>
    <property type="project" value="TreeGrafter"/>
</dbReference>
<dbReference type="GO" id="GO:0009318">
    <property type="term" value="C:exodeoxyribonuclease VII complex"/>
    <property type="evidence" value="ECO:0007669"/>
    <property type="project" value="InterPro"/>
</dbReference>
<dbReference type="GO" id="GO:0008855">
    <property type="term" value="F:exodeoxyribonuclease VII activity"/>
    <property type="evidence" value="ECO:0007669"/>
    <property type="project" value="UniProtKB-UniRule"/>
</dbReference>
<dbReference type="GO" id="GO:0006308">
    <property type="term" value="P:DNA catabolic process"/>
    <property type="evidence" value="ECO:0007669"/>
    <property type="project" value="UniProtKB-UniRule"/>
</dbReference>
<dbReference type="Gene3D" id="1.10.287.1040">
    <property type="entry name" value="Exonuclease VII, small subunit"/>
    <property type="match status" value="1"/>
</dbReference>
<dbReference type="HAMAP" id="MF_00337">
    <property type="entry name" value="Exonuc_7_S"/>
    <property type="match status" value="1"/>
</dbReference>
<dbReference type="InterPro" id="IPR003761">
    <property type="entry name" value="Exonuc_VII_S"/>
</dbReference>
<dbReference type="InterPro" id="IPR037004">
    <property type="entry name" value="Exonuc_VII_ssu_sf"/>
</dbReference>
<dbReference type="NCBIfam" id="NF002139">
    <property type="entry name" value="PRK00977.1-3"/>
    <property type="match status" value="1"/>
</dbReference>
<dbReference type="NCBIfam" id="TIGR01280">
    <property type="entry name" value="xseB"/>
    <property type="match status" value="1"/>
</dbReference>
<dbReference type="PANTHER" id="PTHR34137">
    <property type="entry name" value="EXODEOXYRIBONUCLEASE 7 SMALL SUBUNIT"/>
    <property type="match status" value="1"/>
</dbReference>
<dbReference type="PANTHER" id="PTHR34137:SF1">
    <property type="entry name" value="EXODEOXYRIBONUCLEASE 7 SMALL SUBUNIT"/>
    <property type="match status" value="1"/>
</dbReference>
<dbReference type="Pfam" id="PF02609">
    <property type="entry name" value="Exonuc_VII_S"/>
    <property type="match status" value="1"/>
</dbReference>
<dbReference type="SUPFAM" id="SSF116842">
    <property type="entry name" value="XseB-like"/>
    <property type="match status" value="1"/>
</dbReference>
<feature type="chain" id="PRO_0000206929" description="Exodeoxyribonuclease 7 small subunit">
    <location>
        <begin position="1"/>
        <end position="83"/>
    </location>
</feature>
<keyword id="KW-0963">Cytoplasm</keyword>
<keyword id="KW-0269">Exonuclease</keyword>
<keyword id="KW-0378">Hydrolase</keyword>
<keyword id="KW-0540">Nuclease</keyword>
<sequence>MTEPSNADIAVMSFEDALKQLEKIVDDLERGDVPLEESIRIYERGEALKKHCDTLLKSAEDKVEKIRIGRDGQPVGTEPLDPE</sequence>
<reference key="1">
    <citation type="journal article" date="2002" name="Proc. Natl. Acad. Sci. U.S.A.">
        <title>The genome sequence of the facultative intracellular pathogen Brucella melitensis.</title>
        <authorList>
            <person name="DelVecchio V.G."/>
            <person name="Kapatral V."/>
            <person name="Redkar R.J."/>
            <person name="Patra G."/>
            <person name="Mujer C."/>
            <person name="Los T."/>
            <person name="Ivanova N."/>
            <person name="Anderson I."/>
            <person name="Bhattacharyya A."/>
            <person name="Lykidis A."/>
            <person name="Reznik G."/>
            <person name="Jablonski L."/>
            <person name="Larsen N."/>
            <person name="D'Souza M."/>
            <person name="Bernal A."/>
            <person name="Mazur M."/>
            <person name="Goltsman E."/>
            <person name="Selkov E."/>
            <person name="Elzer P.H."/>
            <person name="Hagius S."/>
            <person name="O'Callaghan D."/>
            <person name="Letesson J.-J."/>
            <person name="Haselkorn R."/>
            <person name="Kyrpides N.C."/>
            <person name="Overbeek R."/>
        </authorList>
    </citation>
    <scope>NUCLEOTIDE SEQUENCE [LARGE SCALE GENOMIC DNA]</scope>
    <source>
        <strain>ATCC 23456 / CCUG 17765 / NCTC 10094 / 16M</strain>
    </source>
</reference>
<gene>
    <name evidence="1" type="primary">xseB</name>
    <name type="ordered locus">BMEI1503</name>
</gene>